<accession>A5D2Z3</accession>
<evidence type="ECO:0000255" key="1">
    <source>
        <dbReference type="HAMAP-Rule" id="MF_00337"/>
    </source>
</evidence>
<comment type="function">
    <text evidence="1">Bidirectionally degrades single-stranded DNA into large acid-insoluble oligonucleotides, which are then degraded further into small acid-soluble oligonucleotides.</text>
</comment>
<comment type="catalytic activity">
    <reaction evidence="1">
        <text>Exonucleolytic cleavage in either 5'- to 3'- or 3'- to 5'-direction to yield nucleoside 5'-phosphates.</text>
        <dbReference type="EC" id="3.1.11.6"/>
    </reaction>
</comment>
<comment type="subunit">
    <text evidence="1">Heterooligomer composed of large and small subunits.</text>
</comment>
<comment type="subcellular location">
    <subcellularLocation>
        <location evidence="1">Cytoplasm</location>
    </subcellularLocation>
</comment>
<comment type="similarity">
    <text evidence="1">Belongs to the XseB family.</text>
</comment>
<protein>
    <recommendedName>
        <fullName evidence="1">Exodeoxyribonuclease 7 small subunit</fullName>
        <ecNumber evidence="1">3.1.11.6</ecNumber>
    </recommendedName>
    <alternativeName>
        <fullName evidence="1">Exodeoxyribonuclease VII small subunit</fullName>
        <shortName evidence="1">Exonuclease VII small subunit</shortName>
    </alternativeName>
</protein>
<sequence length="87" mass="9670">MAEKEMNFEEALARLEAVVKELEDGRLPLQKALELFAEGIGLSRICNRYLEDAEQRIAILTADEKGGVVLRELGPSPAAREDTNDEL</sequence>
<name>EX7S_PELTS</name>
<reference key="1">
    <citation type="journal article" date="2008" name="Genome Res.">
        <title>The genome of Pelotomaculum thermopropionicum reveals niche-associated evolution in anaerobic microbiota.</title>
        <authorList>
            <person name="Kosaka T."/>
            <person name="Kato S."/>
            <person name="Shimoyama T."/>
            <person name="Ishii S."/>
            <person name="Abe T."/>
            <person name="Watanabe K."/>
        </authorList>
    </citation>
    <scope>NUCLEOTIDE SEQUENCE [LARGE SCALE GENOMIC DNA]</scope>
    <source>
        <strain>DSM 13744 / JCM 10971 / SI</strain>
    </source>
</reference>
<keyword id="KW-0963">Cytoplasm</keyword>
<keyword id="KW-0269">Exonuclease</keyword>
<keyword id="KW-0378">Hydrolase</keyword>
<keyword id="KW-0540">Nuclease</keyword>
<keyword id="KW-1185">Reference proteome</keyword>
<gene>
    <name evidence="1" type="primary">xseB</name>
    <name type="ordered locus">PTH_1193</name>
</gene>
<dbReference type="EC" id="3.1.11.6" evidence="1"/>
<dbReference type="EMBL" id="AP009389">
    <property type="protein sequence ID" value="BAF59374.1"/>
    <property type="molecule type" value="Genomic_DNA"/>
</dbReference>
<dbReference type="SMR" id="A5D2Z3"/>
<dbReference type="STRING" id="370438.PTH_1193"/>
<dbReference type="KEGG" id="pth:PTH_1193"/>
<dbReference type="eggNOG" id="COG1722">
    <property type="taxonomic scope" value="Bacteria"/>
</dbReference>
<dbReference type="HOGENOM" id="CLU_145918_3_4_9"/>
<dbReference type="Proteomes" id="UP000006556">
    <property type="component" value="Chromosome"/>
</dbReference>
<dbReference type="GO" id="GO:0005829">
    <property type="term" value="C:cytosol"/>
    <property type="evidence" value="ECO:0007669"/>
    <property type="project" value="TreeGrafter"/>
</dbReference>
<dbReference type="GO" id="GO:0009318">
    <property type="term" value="C:exodeoxyribonuclease VII complex"/>
    <property type="evidence" value="ECO:0007669"/>
    <property type="project" value="InterPro"/>
</dbReference>
<dbReference type="GO" id="GO:0008855">
    <property type="term" value="F:exodeoxyribonuclease VII activity"/>
    <property type="evidence" value="ECO:0007669"/>
    <property type="project" value="UniProtKB-UniRule"/>
</dbReference>
<dbReference type="GO" id="GO:0006308">
    <property type="term" value="P:DNA catabolic process"/>
    <property type="evidence" value="ECO:0007669"/>
    <property type="project" value="UniProtKB-UniRule"/>
</dbReference>
<dbReference type="Gene3D" id="1.10.287.1040">
    <property type="entry name" value="Exonuclease VII, small subunit"/>
    <property type="match status" value="1"/>
</dbReference>
<dbReference type="HAMAP" id="MF_00337">
    <property type="entry name" value="Exonuc_7_S"/>
    <property type="match status" value="1"/>
</dbReference>
<dbReference type="InterPro" id="IPR003761">
    <property type="entry name" value="Exonuc_VII_S"/>
</dbReference>
<dbReference type="InterPro" id="IPR037004">
    <property type="entry name" value="Exonuc_VII_ssu_sf"/>
</dbReference>
<dbReference type="NCBIfam" id="TIGR01280">
    <property type="entry name" value="xseB"/>
    <property type="match status" value="1"/>
</dbReference>
<dbReference type="PANTHER" id="PTHR34137">
    <property type="entry name" value="EXODEOXYRIBONUCLEASE 7 SMALL SUBUNIT"/>
    <property type="match status" value="1"/>
</dbReference>
<dbReference type="PANTHER" id="PTHR34137:SF1">
    <property type="entry name" value="EXODEOXYRIBONUCLEASE 7 SMALL SUBUNIT"/>
    <property type="match status" value="1"/>
</dbReference>
<dbReference type="Pfam" id="PF02609">
    <property type="entry name" value="Exonuc_VII_S"/>
    <property type="match status" value="1"/>
</dbReference>
<dbReference type="SUPFAM" id="SSF116842">
    <property type="entry name" value="XseB-like"/>
    <property type="match status" value="1"/>
</dbReference>
<feature type="chain" id="PRO_1000079288" description="Exodeoxyribonuclease 7 small subunit">
    <location>
        <begin position="1"/>
        <end position="87"/>
    </location>
</feature>
<proteinExistence type="inferred from homology"/>
<organism>
    <name type="scientific">Pelotomaculum thermopropionicum (strain DSM 13744 / JCM 10971 / SI)</name>
    <dbReference type="NCBI Taxonomy" id="370438"/>
    <lineage>
        <taxon>Bacteria</taxon>
        <taxon>Bacillati</taxon>
        <taxon>Bacillota</taxon>
        <taxon>Clostridia</taxon>
        <taxon>Eubacteriales</taxon>
        <taxon>Desulfotomaculaceae</taxon>
        <taxon>Pelotomaculum</taxon>
    </lineage>
</organism>